<comment type="catalytic activity">
    <reaction>
        <text>tRNA(Phe) + L-phenylalanine + ATP = L-phenylalanyl-tRNA(Phe) + AMP + diphosphate + H(+)</text>
        <dbReference type="Rhea" id="RHEA:19413"/>
        <dbReference type="Rhea" id="RHEA-COMP:9668"/>
        <dbReference type="Rhea" id="RHEA-COMP:9699"/>
        <dbReference type="ChEBI" id="CHEBI:15378"/>
        <dbReference type="ChEBI" id="CHEBI:30616"/>
        <dbReference type="ChEBI" id="CHEBI:33019"/>
        <dbReference type="ChEBI" id="CHEBI:58095"/>
        <dbReference type="ChEBI" id="CHEBI:78442"/>
        <dbReference type="ChEBI" id="CHEBI:78531"/>
        <dbReference type="ChEBI" id="CHEBI:456215"/>
        <dbReference type="EC" id="6.1.1.20"/>
    </reaction>
</comment>
<comment type="cofactor">
    <cofactor evidence="1">
        <name>Mg(2+)</name>
        <dbReference type="ChEBI" id="CHEBI:18420"/>
    </cofactor>
    <text evidence="1">Binds 2 magnesium ions per tetramer.</text>
</comment>
<comment type="subunit">
    <text evidence="1">Tetramer of two alpha and two beta subunits.</text>
</comment>
<comment type="subcellular location">
    <subcellularLocation>
        <location evidence="1">Cytoplasm</location>
    </subcellularLocation>
</comment>
<comment type="similarity">
    <text evidence="2">Belongs to the class-II aminoacyl-tRNA synthetase family. Phe-tRNA synthetase alpha subunit type 1 subfamily.</text>
</comment>
<evidence type="ECO:0000250" key="1"/>
<evidence type="ECO:0000305" key="2"/>
<organism>
    <name type="scientific">Mycoplasma pneumoniae (strain ATCC 29342 / M129 / Subtype 1)</name>
    <name type="common">Mycoplasmoides pneumoniae</name>
    <dbReference type="NCBI Taxonomy" id="272634"/>
    <lineage>
        <taxon>Bacteria</taxon>
        <taxon>Bacillati</taxon>
        <taxon>Mycoplasmatota</taxon>
        <taxon>Mycoplasmoidales</taxon>
        <taxon>Mycoplasmoidaceae</taxon>
        <taxon>Mycoplasmoides</taxon>
    </lineage>
</organism>
<reference key="1">
    <citation type="journal article" date="1996" name="Nucleic Acids Res.">
        <title>Complete sequence analysis of the genome of the bacterium Mycoplasma pneumoniae.</title>
        <authorList>
            <person name="Himmelreich R."/>
            <person name="Hilbert H."/>
            <person name="Plagens H."/>
            <person name="Pirkl E."/>
            <person name="Li B.-C."/>
            <person name="Herrmann R."/>
        </authorList>
    </citation>
    <scope>NUCLEOTIDE SEQUENCE [LARGE SCALE GENOMIC DNA]</scope>
    <source>
        <strain>ATCC 29342 / M129 / Subtype 1</strain>
    </source>
</reference>
<reference key="2">
    <citation type="journal article" date="2000" name="Electrophoresis">
        <title>Towards a two-dimensional proteome map of Mycoplasma pneumoniae.</title>
        <authorList>
            <person name="Regula J.T."/>
            <person name="Ueberle B."/>
            <person name="Boguth G."/>
            <person name="Goerg A."/>
            <person name="Schnoelzer M."/>
            <person name="Herrmann R."/>
            <person name="Frank R."/>
        </authorList>
    </citation>
    <scope>IDENTIFICATION BY MASS SPECTROMETRY</scope>
    <source>
        <strain>ATCC 29342 / M129 / Subtype 1</strain>
    </source>
</reference>
<feature type="chain" id="PRO_0000126731" description="Phenylalanine--tRNA ligase alpha subunit">
    <location>
        <begin position="1"/>
        <end position="341"/>
    </location>
</feature>
<feature type="binding site" evidence="1">
    <location>
        <position position="254"/>
    </location>
    <ligand>
        <name>Mg(2+)</name>
        <dbReference type="ChEBI" id="CHEBI:18420"/>
        <note>shared with beta subunit</note>
    </ligand>
</feature>
<name>SYFA_MYCPN</name>
<sequence>MIDQSKLIERWKTTFETAQNPTELLAFKNSFRNADLKPLLSQIKETTDIETKRHLGQLYKQLESTLQTLHDTQLQVFTQAQSSSVLTHGDVMLLATSFAPGSSNIIYQVIDELVNYFKKFLFTVNYDSELTTIADCFDLLNIPKDHPSRNLTDTFYLDKNRLLRTHCTAATLRAVKETKKSNNPDIRIASFGAVFRKDDDDATHSHQFNQLDFMWIKKDFSLTNLKWFMQNMINHIFGENTSARFRLSHFPFTEPSFEIDIRCWLCQNGCGVCKKTRWIEVLGAGILHPQVMANMGFSDTDNIRGIAAGIGIERLVMLKHGISDIRDLYDNNFKFLAQFTD</sequence>
<dbReference type="EC" id="6.1.1.20"/>
<dbReference type="EMBL" id="U00089">
    <property type="protein sequence ID" value="AAB95697.1"/>
    <property type="molecule type" value="Genomic_DNA"/>
</dbReference>
<dbReference type="PIR" id="S73375">
    <property type="entry name" value="S73375"/>
</dbReference>
<dbReference type="RefSeq" id="NP_109793.1">
    <property type="nucleotide sequence ID" value="NC_000912.1"/>
</dbReference>
<dbReference type="RefSeq" id="WP_010874462.1">
    <property type="nucleotide sequence ID" value="NZ_OU342337.1"/>
</dbReference>
<dbReference type="SMR" id="P75564"/>
<dbReference type="IntAct" id="P75564">
    <property type="interactions" value="2"/>
</dbReference>
<dbReference type="STRING" id="272634.MPN_105"/>
<dbReference type="EnsemblBacteria" id="AAB95697">
    <property type="protein sequence ID" value="AAB95697"/>
    <property type="gene ID" value="MPN_105"/>
</dbReference>
<dbReference type="GeneID" id="66609248"/>
<dbReference type="KEGG" id="mpn:MPN_105"/>
<dbReference type="PATRIC" id="fig|272634.6.peg.111"/>
<dbReference type="HOGENOM" id="CLU_025086_0_1_14"/>
<dbReference type="OrthoDB" id="9800719at2"/>
<dbReference type="BioCyc" id="MPNE272634:G1GJ3-180-MONOMER"/>
<dbReference type="Proteomes" id="UP000000808">
    <property type="component" value="Chromosome"/>
</dbReference>
<dbReference type="GO" id="GO:0005737">
    <property type="term" value="C:cytoplasm"/>
    <property type="evidence" value="ECO:0007669"/>
    <property type="project" value="UniProtKB-SubCell"/>
</dbReference>
<dbReference type="GO" id="GO:0005524">
    <property type="term" value="F:ATP binding"/>
    <property type="evidence" value="ECO:0007669"/>
    <property type="project" value="UniProtKB-UniRule"/>
</dbReference>
<dbReference type="GO" id="GO:0000287">
    <property type="term" value="F:magnesium ion binding"/>
    <property type="evidence" value="ECO:0007669"/>
    <property type="project" value="UniProtKB-UniRule"/>
</dbReference>
<dbReference type="GO" id="GO:0004826">
    <property type="term" value="F:phenylalanine-tRNA ligase activity"/>
    <property type="evidence" value="ECO:0007669"/>
    <property type="project" value="UniProtKB-UniRule"/>
</dbReference>
<dbReference type="GO" id="GO:0000049">
    <property type="term" value="F:tRNA binding"/>
    <property type="evidence" value="ECO:0007669"/>
    <property type="project" value="InterPro"/>
</dbReference>
<dbReference type="GO" id="GO:0006432">
    <property type="term" value="P:phenylalanyl-tRNA aminoacylation"/>
    <property type="evidence" value="ECO:0007669"/>
    <property type="project" value="UniProtKB-UniRule"/>
</dbReference>
<dbReference type="CDD" id="cd00496">
    <property type="entry name" value="PheRS_alpha_core"/>
    <property type="match status" value="1"/>
</dbReference>
<dbReference type="FunFam" id="3.30.930.10:FF:000089">
    <property type="entry name" value="Phenylalanine--tRNA ligase alpha subunit"/>
    <property type="match status" value="1"/>
</dbReference>
<dbReference type="Gene3D" id="3.30.930.10">
    <property type="entry name" value="Bira Bifunctional Protein, Domain 2"/>
    <property type="match status" value="1"/>
</dbReference>
<dbReference type="HAMAP" id="MF_00281">
    <property type="entry name" value="Phe_tRNA_synth_alpha1"/>
    <property type="match status" value="1"/>
</dbReference>
<dbReference type="InterPro" id="IPR006195">
    <property type="entry name" value="aa-tRNA-synth_II"/>
</dbReference>
<dbReference type="InterPro" id="IPR045864">
    <property type="entry name" value="aa-tRNA-synth_II/BPL/LPL"/>
</dbReference>
<dbReference type="InterPro" id="IPR004529">
    <property type="entry name" value="Phe-tRNA-synth_IIc_asu"/>
</dbReference>
<dbReference type="InterPro" id="IPR022911">
    <property type="entry name" value="Phe_tRNA_ligase_alpha1_bac"/>
</dbReference>
<dbReference type="InterPro" id="IPR002319">
    <property type="entry name" value="Phenylalanyl-tRNA_Synthase"/>
</dbReference>
<dbReference type="NCBIfam" id="TIGR00468">
    <property type="entry name" value="pheS"/>
    <property type="match status" value="1"/>
</dbReference>
<dbReference type="PANTHER" id="PTHR11538:SF41">
    <property type="entry name" value="PHENYLALANINE--TRNA LIGASE, MITOCHONDRIAL"/>
    <property type="match status" value="1"/>
</dbReference>
<dbReference type="PANTHER" id="PTHR11538">
    <property type="entry name" value="PHENYLALANYL-TRNA SYNTHETASE"/>
    <property type="match status" value="1"/>
</dbReference>
<dbReference type="Pfam" id="PF01409">
    <property type="entry name" value="tRNA-synt_2d"/>
    <property type="match status" value="1"/>
</dbReference>
<dbReference type="SUPFAM" id="SSF55681">
    <property type="entry name" value="Class II aaRS and biotin synthetases"/>
    <property type="match status" value="1"/>
</dbReference>
<dbReference type="PROSITE" id="PS50862">
    <property type="entry name" value="AA_TRNA_LIGASE_II"/>
    <property type="match status" value="1"/>
</dbReference>
<keyword id="KW-0030">Aminoacyl-tRNA synthetase</keyword>
<keyword id="KW-0067">ATP-binding</keyword>
<keyword id="KW-0963">Cytoplasm</keyword>
<keyword id="KW-0436">Ligase</keyword>
<keyword id="KW-0460">Magnesium</keyword>
<keyword id="KW-0479">Metal-binding</keyword>
<keyword id="KW-0547">Nucleotide-binding</keyword>
<keyword id="KW-0648">Protein biosynthesis</keyword>
<keyword id="KW-1185">Reference proteome</keyword>
<proteinExistence type="evidence at protein level"/>
<accession>P75564</accession>
<protein>
    <recommendedName>
        <fullName>Phenylalanine--tRNA ligase alpha subunit</fullName>
        <ecNumber>6.1.1.20</ecNumber>
    </recommendedName>
    <alternativeName>
        <fullName>Phenylalanyl-tRNA synthetase alpha subunit</fullName>
        <shortName>PheRS</shortName>
    </alternativeName>
</protein>
<gene>
    <name type="primary">pheS</name>
    <name type="ordered locus">MPN_105</name>
    <name type="ORF">MP049</name>
</gene>